<feature type="chain" id="PRO_1000144766" description="Hydroxyacylglutathione hydrolase">
    <location>
        <begin position="1"/>
        <end position="251"/>
    </location>
</feature>
<feature type="binding site" evidence="1">
    <location>
        <position position="53"/>
    </location>
    <ligand>
        <name>Zn(2+)</name>
        <dbReference type="ChEBI" id="CHEBI:29105"/>
        <label>1</label>
    </ligand>
</feature>
<feature type="binding site" evidence="1">
    <location>
        <position position="55"/>
    </location>
    <ligand>
        <name>Zn(2+)</name>
        <dbReference type="ChEBI" id="CHEBI:29105"/>
        <label>1</label>
    </ligand>
</feature>
<feature type="binding site" evidence="1">
    <location>
        <position position="57"/>
    </location>
    <ligand>
        <name>Zn(2+)</name>
        <dbReference type="ChEBI" id="CHEBI:29105"/>
        <label>2</label>
    </ligand>
</feature>
<feature type="binding site" evidence="1">
    <location>
        <position position="58"/>
    </location>
    <ligand>
        <name>Zn(2+)</name>
        <dbReference type="ChEBI" id="CHEBI:29105"/>
        <label>2</label>
    </ligand>
</feature>
<feature type="binding site" evidence="1">
    <location>
        <position position="110"/>
    </location>
    <ligand>
        <name>Zn(2+)</name>
        <dbReference type="ChEBI" id="CHEBI:29105"/>
        <label>1</label>
    </ligand>
</feature>
<feature type="binding site" evidence="1">
    <location>
        <position position="127"/>
    </location>
    <ligand>
        <name>Zn(2+)</name>
        <dbReference type="ChEBI" id="CHEBI:29105"/>
        <label>1</label>
    </ligand>
</feature>
<feature type="binding site" evidence="1">
    <location>
        <position position="127"/>
    </location>
    <ligand>
        <name>Zn(2+)</name>
        <dbReference type="ChEBI" id="CHEBI:29105"/>
        <label>2</label>
    </ligand>
</feature>
<feature type="binding site" evidence="1">
    <location>
        <position position="165"/>
    </location>
    <ligand>
        <name>Zn(2+)</name>
        <dbReference type="ChEBI" id="CHEBI:29105"/>
        <label>2</label>
    </ligand>
</feature>
<name>GLO2_ERWT9</name>
<reference key="1">
    <citation type="journal article" date="2008" name="Environ. Microbiol.">
        <title>The genome of Erwinia tasmaniensis strain Et1/99, a non-pathogenic bacterium in the genus Erwinia.</title>
        <authorList>
            <person name="Kube M."/>
            <person name="Migdoll A.M."/>
            <person name="Mueller I."/>
            <person name="Kuhl H."/>
            <person name="Beck A."/>
            <person name="Reinhardt R."/>
            <person name="Geider K."/>
        </authorList>
    </citation>
    <scope>NUCLEOTIDE SEQUENCE [LARGE SCALE GENOMIC DNA]</scope>
    <source>
        <strain>DSM 17950 / CFBP 7177 / CIP 109463 / NCPPB 4357 / Et1/99</strain>
    </source>
</reference>
<comment type="function">
    <text evidence="1">Thiolesterase that catalyzes the hydrolysis of S-D-lactoyl-glutathione to form glutathione and D-lactic acid.</text>
</comment>
<comment type="catalytic activity">
    <reaction evidence="1">
        <text>an S-(2-hydroxyacyl)glutathione + H2O = a 2-hydroxy carboxylate + glutathione + H(+)</text>
        <dbReference type="Rhea" id="RHEA:21864"/>
        <dbReference type="ChEBI" id="CHEBI:15377"/>
        <dbReference type="ChEBI" id="CHEBI:15378"/>
        <dbReference type="ChEBI" id="CHEBI:57925"/>
        <dbReference type="ChEBI" id="CHEBI:58896"/>
        <dbReference type="ChEBI" id="CHEBI:71261"/>
        <dbReference type="EC" id="3.1.2.6"/>
    </reaction>
</comment>
<comment type="cofactor">
    <cofactor evidence="1">
        <name>Zn(2+)</name>
        <dbReference type="ChEBI" id="CHEBI:29105"/>
    </cofactor>
    <text evidence="1">Binds 2 Zn(2+) ions per subunit.</text>
</comment>
<comment type="pathway">
    <text evidence="1">Secondary metabolite metabolism; methylglyoxal degradation; (R)-lactate from methylglyoxal: step 2/2.</text>
</comment>
<comment type="subunit">
    <text evidence="1">Monomer.</text>
</comment>
<comment type="similarity">
    <text evidence="1">Belongs to the metallo-beta-lactamase superfamily. Glyoxalase II family.</text>
</comment>
<dbReference type="EC" id="3.1.2.6" evidence="1"/>
<dbReference type="EMBL" id="CU468135">
    <property type="protein sequence ID" value="CAO97683.1"/>
    <property type="molecule type" value="Genomic_DNA"/>
</dbReference>
<dbReference type="RefSeq" id="WP_012442347.1">
    <property type="nucleotide sequence ID" value="NC_010694.1"/>
</dbReference>
<dbReference type="SMR" id="B2VHJ7"/>
<dbReference type="STRING" id="465817.ETA_26370"/>
<dbReference type="KEGG" id="eta:ETA_26370"/>
<dbReference type="eggNOG" id="COG0491">
    <property type="taxonomic scope" value="Bacteria"/>
</dbReference>
<dbReference type="HOGENOM" id="CLU_030571_4_1_6"/>
<dbReference type="OrthoDB" id="9802248at2"/>
<dbReference type="UniPathway" id="UPA00619">
    <property type="reaction ID" value="UER00676"/>
</dbReference>
<dbReference type="Proteomes" id="UP000001726">
    <property type="component" value="Chromosome"/>
</dbReference>
<dbReference type="GO" id="GO:0004416">
    <property type="term" value="F:hydroxyacylglutathione hydrolase activity"/>
    <property type="evidence" value="ECO:0007669"/>
    <property type="project" value="UniProtKB-UniRule"/>
</dbReference>
<dbReference type="GO" id="GO:0046872">
    <property type="term" value="F:metal ion binding"/>
    <property type="evidence" value="ECO:0007669"/>
    <property type="project" value="UniProtKB-KW"/>
</dbReference>
<dbReference type="GO" id="GO:0019243">
    <property type="term" value="P:methylglyoxal catabolic process to D-lactate via S-lactoyl-glutathione"/>
    <property type="evidence" value="ECO:0007669"/>
    <property type="project" value="InterPro"/>
</dbReference>
<dbReference type="CDD" id="cd07723">
    <property type="entry name" value="hydroxyacylglutathione_hydrolase_MBL-fold"/>
    <property type="match status" value="1"/>
</dbReference>
<dbReference type="Gene3D" id="3.60.15.10">
    <property type="entry name" value="Ribonuclease Z/Hydroxyacylglutathione hydrolase-like"/>
    <property type="match status" value="1"/>
</dbReference>
<dbReference type="HAMAP" id="MF_01374">
    <property type="entry name" value="Glyoxalase_2"/>
    <property type="match status" value="1"/>
</dbReference>
<dbReference type="InterPro" id="IPR035680">
    <property type="entry name" value="Clx_II_MBL"/>
</dbReference>
<dbReference type="InterPro" id="IPR050110">
    <property type="entry name" value="Glyoxalase_II_hydrolase"/>
</dbReference>
<dbReference type="InterPro" id="IPR032282">
    <property type="entry name" value="HAGH_C"/>
</dbReference>
<dbReference type="InterPro" id="IPR017782">
    <property type="entry name" value="Hydroxyacylglutathione_Hdrlase"/>
</dbReference>
<dbReference type="InterPro" id="IPR001279">
    <property type="entry name" value="Metallo-B-lactamas"/>
</dbReference>
<dbReference type="InterPro" id="IPR036866">
    <property type="entry name" value="RibonucZ/Hydroxyglut_hydro"/>
</dbReference>
<dbReference type="NCBIfam" id="TIGR03413">
    <property type="entry name" value="GSH_gloB"/>
    <property type="match status" value="1"/>
</dbReference>
<dbReference type="PANTHER" id="PTHR43705">
    <property type="entry name" value="HYDROXYACYLGLUTATHIONE HYDROLASE"/>
    <property type="match status" value="1"/>
</dbReference>
<dbReference type="PANTHER" id="PTHR43705:SF1">
    <property type="entry name" value="HYDROXYACYLGLUTATHIONE HYDROLASE GLOB"/>
    <property type="match status" value="1"/>
</dbReference>
<dbReference type="Pfam" id="PF16123">
    <property type="entry name" value="HAGH_C"/>
    <property type="match status" value="1"/>
</dbReference>
<dbReference type="Pfam" id="PF00753">
    <property type="entry name" value="Lactamase_B"/>
    <property type="match status" value="1"/>
</dbReference>
<dbReference type="PIRSF" id="PIRSF005457">
    <property type="entry name" value="Glx"/>
    <property type="match status" value="1"/>
</dbReference>
<dbReference type="SMART" id="SM00849">
    <property type="entry name" value="Lactamase_B"/>
    <property type="match status" value="1"/>
</dbReference>
<dbReference type="SUPFAM" id="SSF56281">
    <property type="entry name" value="Metallo-hydrolase/oxidoreductase"/>
    <property type="match status" value="1"/>
</dbReference>
<evidence type="ECO:0000255" key="1">
    <source>
        <dbReference type="HAMAP-Rule" id="MF_01374"/>
    </source>
</evidence>
<keyword id="KW-0378">Hydrolase</keyword>
<keyword id="KW-0479">Metal-binding</keyword>
<keyword id="KW-1185">Reference proteome</keyword>
<keyword id="KW-0862">Zinc</keyword>
<organism>
    <name type="scientific">Erwinia tasmaniensis (strain DSM 17950 / CFBP 7177 / CIP 109463 / NCPPB 4357 / Et1/99)</name>
    <dbReference type="NCBI Taxonomy" id="465817"/>
    <lineage>
        <taxon>Bacteria</taxon>
        <taxon>Pseudomonadati</taxon>
        <taxon>Pseudomonadota</taxon>
        <taxon>Gammaproteobacteria</taxon>
        <taxon>Enterobacterales</taxon>
        <taxon>Erwiniaceae</taxon>
        <taxon>Erwinia</taxon>
    </lineage>
</organism>
<protein>
    <recommendedName>
        <fullName evidence="1">Hydroxyacylglutathione hydrolase</fullName>
        <ecNumber evidence="1">3.1.2.6</ecNumber>
    </recommendedName>
    <alternativeName>
        <fullName evidence="1">Glyoxalase II</fullName>
        <shortName evidence="1">Glx II</shortName>
    </alternativeName>
</protein>
<proteinExistence type="inferred from homology"/>
<sequence length="251" mass="28491">MNLTSIPALQDNYIWTLNDDSGRCLIVDPGEAAPVLRAITENQWQPQAILLTHHHHDHVGGVAELLSHYPDLTVYGPQETSHKGANSLVGDGDRIHVLGLDFTIIATPGHTLGHISYFSHPYLFCGDTLFSAGCGRLFEGTAKQMFESFQKLNQLPDDTLVCCAHEYTLSNLTFSHTFYPQDTEIARYYHEIKELRSKNGITLPTKLELERKINVFLRTKDVELQRLISTEPDHLDEWEIFATLREKKDSF</sequence>
<accession>B2VHJ7</accession>
<gene>
    <name evidence="1" type="primary">gloB</name>
    <name type="ordered locus">ETA_26370</name>
</gene>